<proteinExistence type="inferred from homology"/>
<accession>Q48NP8</accession>
<reference key="1">
    <citation type="journal article" date="2005" name="J. Bacteriol.">
        <title>Whole-genome sequence analysis of Pseudomonas syringae pv. phaseolicola 1448A reveals divergence among pathovars in genes involved in virulence and transposition.</title>
        <authorList>
            <person name="Joardar V."/>
            <person name="Lindeberg M."/>
            <person name="Jackson R.W."/>
            <person name="Selengut J."/>
            <person name="Dodson R."/>
            <person name="Brinkac L.M."/>
            <person name="Daugherty S.C."/>
            <person name="DeBoy R.T."/>
            <person name="Durkin A.S."/>
            <person name="Gwinn Giglio M."/>
            <person name="Madupu R."/>
            <person name="Nelson W.C."/>
            <person name="Rosovitz M.J."/>
            <person name="Sullivan S.A."/>
            <person name="Crabtree J."/>
            <person name="Creasy T."/>
            <person name="Davidsen T.M."/>
            <person name="Haft D.H."/>
            <person name="Zafar N."/>
            <person name="Zhou L."/>
            <person name="Halpin R."/>
            <person name="Holley T."/>
            <person name="Khouri H.M."/>
            <person name="Feldblyum T.V."/>
            <person name="White O."/>
            <person name="Fraser C.M."/>
            <person name="Chatterjee A.K."/>
            <person name="Cartinhour S."/>
            <person name="Schneider D."/>
            <person name="Mansfield J.W."/>
            <person name="Collmer A."/>
            <person name="Buell R."/>
        </authorList>
    </citation>
    <scope>NUCLEOTIDE SEQUENCE [LARGE SCALE GENOMIC DNA]</scope>
    <source>
        <strain>1448A / Race 6</strain>
    </source>
</reference>
<sequence>MNIKSALNRVVNQLDLTTDEMRDVMREIMTGQCTEAQIGAFLMGMRMKSETIDEIVGAVSVMRELASSVELKTLDGVVDIVGTGGDGANIFNVSTASAFVIAAAGCKVAKHGNRAVSGKSGSADLLEAAGVYLNLTPVQVARCIDSVGIGFMFAQSHHTAMKHTAGPRRELGLRTLFNMLGPLTNPAGVRHQIVGVFNQALCRPLAEVLLRLGSKHVLVVHSQDGLDEFSLAAPTFVAELKNGEVTEYWVQPEDLGIKSQSLYGLAVESPAVSLELIRDALGRRKTENGQKAAEMIVLNAGAALYAADHATSLKEGVALAHDALHTGLAREKLEELGAFTAVFKQENEA</sequence>
<comment type="function">
    <text evidence="1">Catalyzes the transfer of the phosphoribosyl group of 5-phosphorylribose-1-pyrophosphate (PRPP) to anthranilate to yield N-(5'-phosphoribosyl)-anthranilate (PRA).</text>
</comment>
<comment type="catalytic activity">
    <reaction evidence="1">
        <text>N-(5-phospho-beta-D-ribosyl)anthranilate + diphosphate = 5-phospho-alpha-D-ribose 1-diphosphate + anthranilate</text>
        <dbReference type="Rhea" id="RHEA:11768"/>
        <dbReference type="ChEBI" id="CHEBI:16567"/>
        <dbReference type="ChEBI" id="CHEBI:18277"/>
        <dbReference type="ChEBI" id="CHEBI:33019"/>
        <dbReference type="ChEBI" id="CHEBI:58017"/>
        <dbReference type="EC" id="2.4.2.18"/>
    </reaction>
</comment>
<comment type="cofactor">
    <cofactor evidence="1">
        <name>Mg(2+)</name>
        <dbReference type="ChEBI" id="CHEBI:18420"/>
    </cofactor>
    <text evidence="1">Binds 2 magnesium ions per monomer.</text>
</comment>
<comment type="pathway">
    <text evidence="1">Amino-acid biosynthesis; L-tryptophan biosynthesis; L-tryptophan from chorismate: step 2/5.</text>
</comment>
<comment type="subunit">
    <text evidence="1">Homodimer.</text>
</comment>
<comment type="similarity">
    <text evidence="1">Belongs to the anthranilate phosphoribosyltransferase family.</text>
</comment>
<keyword id="KW-0028">Amino-acid biosynthesis</keyword>
<keyword id="KW-0057">Aromatic amino acid biosynthesis</keyword>
<keyword id="KW-0328">Glycosyltransferase</keyword>
<keyword id="KW-0460">Magnesium</keyword>
<keyword id="KW-0479">Metal-binding</keyword>
<keyword id="KW-0808">Transferase</keyword>
<keyword id="KW-0822">Tryptophan biosynthesis</keyword>
<gene>
    <name evidence="1" type="primary">trpD</name>
    <name type="ordered locus">PSPPH_0673</name>
</gene>
<protein>
    <recommendedName>
        <fullName evidence="1">Anthranilate phosphoribosyltransferase</fullName>
        <ecNumber evidence="1">2.4.2.18</ecNumber>
    </recommendedName>
</protein>
<organism>
    <name type="scientific">Pseudomonas savastanoi pv. phaseolicola (strain 1448A / Race 6)</name>
    <name type="common">Pseudomonas syringae pv. phaseolicola (strain 1448A / Race 6)</name>
    <dbReference type="NCBI Taxonomy" id="264730"/>
    <lineage>
        <taxon>Bacteria</taxon>
        <taxon>Pseudomonadati</taxon>
        <taxon>Pseudomonadota</taxon>
        <taxon>Gammaproteobacteria</taxon>
        <taxon>Pseudomonadales</taxon>
        <taxon>Pseudomonadaceae</taxon>
        <taxon>Pseudomonas</taxon>
    </lineage>
</organism>
<feature type="chain" id="PRO_0000227185" description="Anthranilate phosphoribosyltransferase">
    <location>
        <begin position="1"/>
        <end position="349"/>
    </location>
</feature>
<feature type="binding site" evidence="1">
    <location>
        <position position="82"/>
    </location>
    <ligand>
        <name>5-phospho-alpha-D-ribose 1-diphosphate</name>
        <dbReference type="ChEBI" id="CHEBI:58017"/>
    </ligand>
</feature>
<feature type="binding site" evidence="1">
    <location>
        <position position="82"/>
    </location>
    <ligand>
        <name>anthranilate</name>
        <dbReference type="ChEBI" id="CHEBI:16567"/>
        <label>1</label>
    </ligand>
</feature>
<feature type="binding site" evidence="1">
    <location>
        <begin position="85"/>
        <end position="86"/>
    </location>
    <ligand>
        <name>5-phospho-alpha-D-ribose 1-diphosphate</name>
        <dbReference type="ChEBI" id="CHEBI:58017"/>
    </ligand>
</feature>
<feature type="binding site" evidence="1">
    <location>
        <begin position="92"/>
        <end position="95"/>
    </location>
    <ligand>
        <name>5-phospho-alpha-D-ribose 1-diphosphate</name>
        <dbReference type="ChEBI" id="CHEBI:58017"/>
    </ligand>
</feature>
<feature type="binding site" evidence="1">
    <location>
        <position position="94"/>
    </location>
    <ligand>
        <name>Mg(2+)</name>
        <dbReference type="ChEBI" id="CHEBI:18420"/>
        <label>1</label>
    </ligand>
</feature>
<feature type="binding site" evidence="1">
    <location>
        <begin position="110"/>
        <end position="118"/>
    </location>
    <ligand>
        <name>5-phospho-alpha-D-ribose 1-diphosphate</name>
        <dbReference type="ChEBI" id="CHEBI:58017"/>
    </ligand>
</feature>
<feature type="binding site" evidence="1">
    <location>
        <position position="113"/>
    </location>
    <ligand>
        <name>anthranilate</name>
        <dbReference type="ChEBI" id="CHEBI:16567"/>
        <label>1</label>
    </ligand>
</feature>
<feature type="binding site" evidence="1">
    <location>
        <position position="122"/>
    </location>
    <ligand>
        <name>5-phospho-alpha-D-ribose 1-diphosphate</name>
        <dbReference type="ChEBI" id="CHEBI:58017"/>
    </ligand>
</feature>
<feature type="binding site" evidence="1">
    <location>
        <position position="168"/>
    </location>
    <ligand>
        <name>anthranilate</name>
        <dbReference type="ChEBI" id="CHEBI:16567"/>
        <label>2</label>
    </ligand>
</feature>
<feature type="binding site" evidence="1">
    <location>
        <position position="227"/>
    </location>
    <ligand>
        <name>Mg(2+)</name>
        <dbReference type="ChEBI" id="CHEBI:18420"/>
        <label>2</label>
    </ligand>
</feature>
<feature type="binding site" evidence="1">
    <location>
        <position position="228"/>
    </location>
    <ligand>
        <name>Mg(2+)</name>
        <dbReference type="ChEBI" id="CHEBI:18420"/>
        <label>1</label>
    </ligand>
</feature>
<feature type="binding site" evidence="1">
    <location>
        <position position="228"/>
    </location>
    <ligand>
        <name>Mg(2+)</name>
        <dbReference type="ChEBI" id="CHEBI:18420"/>
        <label>2</label>
    </ligand>
</feature>
<evidence type="ECO:0000255" key="1">
    <source>
        <dbReference type="HAMAP-Rule" id="MF_00211"/>
    </source>
</evidence>
<dbReference type="EC" id="2.4.2.18" evidence="1"/>
<dbReference type="EMBL" id="CP000058">
    <property type="protein sequence ID" value="AAZ37792.1"/>
    <property type="molecule type" value="Genomic_DNA"/>
</dbReference>
<dbReference type="RefSeq" id="WP_011167625.1">
    <property type="nucleotide sequence ID" value="NC_005773.3"/>
</dbReference>
<dbReference type="SMR" id="Q48NP8"/>
<dbReference type="KEGG" id="psp:PSPPH_0673"/>
<dbReference type="eggNOG" id="COG0547">
    <property type="taxonomic scope" value="Bacteria"/>
</dbReference>
<dbReference type="HOGENOM" id="CLU_034315_2_1_6"/>
<dbReference type="UniPathway" id="UPA00035">
    <property type="reaction ID" value="UER00041"/>
</dbReference>
<dbReference type="Proteomes" id="UP000000551">
    <property type="component" value="Chromosome"/>
</dbReference>
<dbReference type="GO" id="GO:0005829">
    <property type="term" value="C:cytosol"/>
    <property type="evidence" value="ECO:0007669"/>
    <property type="project" value="TreeGrafter"/>
</dbReference>
<dbReference type="GO" id="GO:0004048">
    <property type="term" value="F:anthranilate phosphoribosyltransferase activity"/>
    <property type="evidence" value="ECO:0007669"/>
    <property type="project" value="UniProtKB-UniRule"/>
</dbReference>
<dbReference type="GO" id="GO:0000287">
    <property type="term" value="F:magnesium ion binding"/>
    <property type="evidence" value="ECO:0007669"/>
    <property type="project" value="UniProtKB-UniRule"/>
</dbReference>
<dbReference type="GO" id="GO:0000162">
    <property type="term" value="P:L-tryptophan biosynthetic process"/>
    <property type="evidence" value="ECO:0007669"/>
    <property type="project" value="UniProtKB-UniRule"/>
</dbReference>
<dbReference type="FunFam" id="1.20.970.10:FF:000006">
    <property type="entry name" value="Anthranilate phosphoribosyltransferase"/>
    <property type="match status" value="1"/>
</dbReference>
<dbReference type="FunFam" id="3.40.1030.10:FF:000002">
    <property type="entry name" value="Anthranilate phosphoribosyltransferase"/>
    <property type="match status" value="1"/>
</dbReference>
<dbReference type="Gene3D" id="3.40.1030.10">
    <property type="entry name" value="Nucleoside phosphorylase/phosphoribosyltransferase catalytic domain"/>
    <property type="match status" value="1"/>
</dbReference>
<dbReference type="Gene3D" id="1.20.970.10">
    <property type="entry name" value="Transferase, Pyrimidine Nucleoside Phosphorylase, Chain C"/>
    <property type="match status" value="1"/>
</dbReference>
<dbReference type="HAMAP" id="MF_00211">
    <property type="entry name" value="TrpD"/>
    <property type="match status" value="1"/>
</dbReference>
<dbReference type="InterPro" id="IPR005940">
    <property type="entry name" value="Anthranilate_Pribosyl_Tfrase"/>
</dbReference>
<dbReference type="InterPro" id="IPR000312">
    <property type="entry name" value="Glycosyl_Trfase_fam3"/>
</dbReference>
<dbReference type="InterPro" id="IPR017459">
    <property type="entry name" value="Glycosyl_Trfase_fam3_N_dom"/>
</dbReference>
<dbReference type="InterPro" id="IPR036320">
    <property type="entry name" value="Glycosyl_Trfase_fam3_N_dom_sf"/>
</dbReference>
<dbReference type="InterPro" id="IPR035902">
    <property type="entry name" value="Nuc_phospho_transferase"/>
</dbReference>
<dbReference type="NCBIfam" id="TIGR01245">
    <property type="entry name" value="trpD"/>
    <property type="match status" value="1"/>
</dbReference>
<dbReference type="PANTHER" id="PTHR43285">
    <property type="entry name" value="ANTHRANILATE PHOSPHORIBOSYLTRANSFERASE"/>
    <property type="match status" value="1"/>
</dbReference>
<dbReference type="PANTHER" id="PTHR43285:SF2">
    <property type="entry name" value="ANTHRANILATE PHOSPHORIBOSYLTRANSFERASE"/>
    <property type="match status" value="1"/>
</dbReference>
<dbReference type="Pfam" id="PF02885">
    <property type="entry name" value="Glycos_trans_3N"/>
    <property type="match status" value="1"/>
</dbReference>
<dbReference type="Pfam" id="PF00591">
    <property type="entry name" value="Glycos_transf_3"/>
    <property type="match status" value="1"/>
</dbReference>
<dbReference type="SUPFAM" id="SSF52418">
    <property type="entry name" value="Nucleoside phosphorylase/phosphoribosyltransferase catalytic domain"/>
    <property type="match status" value="1"/>
</dbReference>
<dbReference type="SUPFAM" id="SSF47648">
    <property type="entry name" value="Nucleoside phosphorylase/phosphoribosyltransferase N-terminal domain"/>
    <property type="match status" value="1"/>
</dbReference>
<name>TRPD_PSE14</name>